<organism>
    <name type="scientific">Rattus norvegicus</name>
    <name type="common">Rat</name>
    <dbReference type="NCBI Taxonomy" id="10116"/>
    <lineage>
        <taxon>Eukaryota</taxon>
        <taxon>Metazoa</taxon>
        <taxon>Chordata</taxon>
        <taxon>Craniata</taxon>
        <taxon>Vertebrata</taxon>
        <taxon>Euteleostomi</taxon>
        <taxon>Mammalia</taxon>
        <taxon>Eutheria</taxon>
        <taxon>Euarchontoglires</taxon>
        <taxon>Glires</taxon>
        <taxon>Rodentia</taxon>
        <taxon>Myomorpha</taxon>
        <taxon>Muroidea</taxon>
        <taxon>Muridae</taxon>
        <taxon>Murinae</taxon>
        <taxon>Rattus</taxon>
    </lineage>
</organism>
<sequence>MLRLGGAGLVRGLRVVSPAWLRGPGGLPLALARTTGTSGARDRRAPASGTQRGRALSLSAAAVVNSAPRPLQPYLRLMRLDKPIGTWLLYLPCTWSIGLAADPGCFPDWYMLSLFGTGAILMRGAGCTINDMWDRDFDKKVERTANRPIAAGDISAFQSFVFLGAQLTLALGVLLHLNYYSIAMGAASLLLVVTYPLMKRVTFWPQLALGLTFNWGALLGWSAVKGSCDPAVCLPLYFSGVMWTLIYDTIYAHQDKKDDALIGLKSTALLFRENTKQWLSGFGVAMVGALSLVGASSGQTLPYYAAVAAVGAHLAHQIYTVDIHRAEDCWEKFTSNRTVGLLLFLGIVLGNLYKDKPDETKGVDAVGEESERTS</sequence>
<accession>Q499N4</accession>
<dbReference type="EC" id="2.5.1.39" evidence="6"/>
<dbReference type="EMBL" id="BC099827">
    <property type="protein sequence ID" value="AAH99827.1"/>
    <property type="molecule type" value="mRNA"/>
</dbReference>
<dbReference type="RefSeq" id="NP_001037720.1">
    <property type="nucleotide sequence ID" value="NM_001044255.1"/>
</dbReference>
<dbReference type="SMR" id="Q499N4"/>
<dbReference type="FunCoup" id="Q499N4">
    <property type="interactions" value="463"/>
</dbReference>
<dbReference type="STRING" id="10116.ENSRNOP00000002987"/>
<dbReference type="PhosphoSitePlus" id="Q499N4"/>
<dbReference type="PaxDb" id="10116-ENSRNOP00000002987"/>
<dbReference type="GeneID" id="498332"/>
<dbReference type="KEGG" id="rno:498332"/>
<dbReference type="AGR" id="RGD:1306722"/>
<dbReference type="CTD" id="27235"/>
<dbReference type="RGD" id="1306722">
    <property type="gene designation" value="Coq2"/>
</dbReference>
<dbReference type="eggNOG" id="KOG1381">
    <property type="taxonomic scope" value="Eukaryota"/>
</dbReference>
<dbReference type="InParanoid" id="Q499N4"/>
<dbReference type="OrthoDB" id="68739at9989"/>
<dbReference type="PhylomeDB" id="Q499N4"/>
<dbReference type="BRENDA" id="2.5.1.39">
    <property type="organism ID" value="5301"/>
</dbReference>
<dbReference type="Reactome" id="R-RNO-1268020">
    <property type="pathway name" value="Mitochondrial protein import"/>
</dbReference>
<dbReference type="Reactome" id="R-RNO-2142789">
    <property type="pathway name" value="Ubiquinol biosynthesis"/>
</dbReference>
<dbReference type="UniPathway" id="UPA00232"/>
<dbReference type="PRO" id="PR:Q499N4"/>
<dbReference type="Proteomes" id="UP000002494">
    <property type="component" value="Unplaced"/>
</dbReference>
<dbReference type="GO" id="GO:0005743">
    <property type="term" value="C:mitochondrial inner membrane"/>
    <property type="evidence" value="ECO:0000250"/>
    <property type="project" value="UniProtKB"/>
</dbReference>
<dbReference type="GO" id="GO:0008412">
    <property type="term" value="F:4-hydroxybenzoate polyprenyltransferase activity"/>
    <property type="evidence" value="ECO:0000250"/>
    <property type="project" value="UniProtKB"/>
</dbReference>
<dbReference type="GO" id="GO:0004659">
    <property type="term" value="F:prenyltransferase activity"/>
    <property type="evidence" value="ECO:0000266"/>
    <property type="project" value="RGD"/>
</dbReference>
<dbReference type="GO" id="GO:0006071">
    <property type="term" value="P:glycerol metabolic process"/>
    <property type="evidence" value="ECO:0000266"/>
    <property type="project" value="RGD"/>
</dbReference>
<dbReference type="GO" id="GO:0008299">
    <property type="term" value="P:isoprenoid biosynthetic process"/>
    <property type="evidence" value="ECO:0007669"/>
    <property type="project" value="UniProtKB-UniRule"/>
</dbReference>
<dbReference type="GO" id="GO:0006744">
    <property type="term" value="P:ubiquinone biosynthetic process"/>
    <property type="evidence" value="ECO:0000250"/>
    <property type="project" value="UniProtKB"/>
</dbReference>
<dbReference type="CDD" id="cd13959">
    <property type="entry name" value="PT_UbiA_COQ2"/>
    <property type="match status" value="1"/>
</dbReference>
<dbReference type="FunFam" id="1.20.120.1780:FF:000001">
    <property type="entry name" value="4-hydroxybenzoate octaprenyltransferase"/>
    <property type="match status" value="1"/>
</dbReference>
<dbReference type="FunFam" id="1.10.357.140:FF:000003">
    <property type="entry name" value="4-hydroxybenzoate polyprenyltransferase, mitochondrial"/>
    <property type="match status" value="1"/>
</dbReference>
<dbReference type="Gene3D" id="1.10.357.140">
    <property type="entry name" value="UbiA prenyltransferase"/>
    <property type="match status" value="1"/>
</dbReference>
<dbReference type="Gene3D" id="1.20.120.1780">
    <property type="entry name" value="UbiA prenyltransferase"/>
    <property type="match status" value="1"/>
</dbReference>
<dbReference type="HAMAP" id="MF_01635">
    <property type="entry name" value="UbiA"/>
    <property type="match status" value="1"/>
</dbReference>
<dbReference type="InterPro" id="IPR006370">
    <property type="entry name" value="HB_polyprenyltransferase-like"/>
</dbReference>
<dbReference type="InterPro" id="IPR039653">
    <property type="entry name" value="Prenyltransferase"/>
</dbReference>
<dbReference type="InterPro" id="IPR000537">
    <property type="entry name" value="UbiA_prenyltransferase"/>
</dbReference>
<dbReference type="InterPro" id="IPR030470">
    <property type="entry name" value="UbiA_prenylTrfase_CS"/>
</dbReference>
<dbReference type="InterPro" id="IPR044878">
    <property type="entry name" value="UbiA_sf"/>
</dbReference>
<dbReference type="NCBIfam" id="TIGR01474">
    <property type="entry name" value="ubiA_proteo"/>
    <property type="match status" value="1"/>
</dbReference>
<dbReference type="PANTHER" id="PTHR11048:SF28">
    <property type="entry name" value="4-HYDROXYBENZOATE POLYPRENYLTRANSFERASE, MITOCHONDRIAL"/>
    <property type="match status" value="1"/>
</dbReference>
<dbReference type="PANTHER" id="PTHR11048">
    <property type="entry name" value="PRENYLTRANSFERASES"/>
    <property type="match status" value="1"/>
</dbReference>
<dbReference type="Pfam" id="PF01040">
    <property type="entry name" value="UbiA"/>
    <property type="match status" value="1"/>
</dbReference>
<dbReference type="PROSITE" id="PS00943">
    <property type="entry name" value="UBIA"/>
    <property type="match status" value="1"/>
</dbReference>
<protein>
    <recommendedName>
        <fullName evidence="3">4-hydroxybenzoate polyprenyltransferase, mitochondrial</fullName>
        <shortName evidence="3">4-HB polyprenyltransferase</shortName>
        <ecNumber evidence="6">2.5.1.39</ecNumber>
    </recommendedName>
    <alternativeName>
        <fullName evidence="3">Para-hydroxybenzoate--polyprenyltransferase</fullName>
        <shortName evidence="3">PHB:PPT</shortName>
        <shortName evidence="3">PHB:polyprenyltransferase</shortName>
    </alternativeName>
</protein>
<reference key="1">
    <citation type="journal article" date="2004" name="Genome Res.">
        <title>The status, quality, and expansion of the NIH full-length cDNA project: the Mammalian Gene Collection (MGC).</title>
        <authorList>
            <consortium name="The MGC Project Team"/>
        </authorList>
    </citation>
    <scope>NUCLEOTIDE SEQUENCE [LARGE SCALE MRNA]</scope>
    <source>
        <tissue>Prostate</tissue>
    </source>
</reference>
<reference key="2">
    <citation type="journal article" date="2010" name="Nat. Chem. Biol.">
        <title>4-Nitrobenzoate inhibits coenzyme Q biosynthesis in mammalian cell cultures.</title>
        <authorList>
            <person name="Forsman U."/>
            <person name="Sjoeberg M."/>
            <person name="Turunen M."/>
            <person name="Sindelar P.J."/>
        </authorList>
    </citation>
    <scope>FUNCTION</scope>
    <scope>CATALYTIC ACTIVITY</scope>
    <scope>PATHWAY</scope>
</reference>
<reference key="3">
    <citation type="journal article" date="2012" name="J. Mol. Cell. Cardiol.">
        <title>Opposite and tissue-specific effects of coenzyme Q2 on mPTP opening and ROS production between heart and liver mitochondria: role of complex I.</title>
        <authorList>
            <person name="Gharib A."/>
            <person name="De Paulis D."/>
            <person name="Li B."/>
            <person name="Augeul L."/>
            <person name="Couture-Lepetit E."/>
            <person name="Gomez L."/>
            <person name="Angoulvant D."/>
            <person name="Ovize M."/>
        </authorList>
    </citation>
    <scope>FUNCTION</scope>
</reference>
<keyword id="KW-0414">Isoprene biosynthesis</keyword>
<keyword id="KW-0472">Membrane</keyword>
<keyword id="KW-0496">Mitochondrion</keyword>
<keyword id="KW-0999">Mitochondrion inner membrane</keyword>
<keyword id="KW-1185">Reference proteome</keyword>
<keyword id="KW-0808">Transferase</keyword>
<keyword id="KW-0809">Transit peptide</keyword>
<keyword id="KW-0812">Transmembrane</keyword>
<keyword id="KW-1133">Transmembrane helix</keyword>
<keyword id="KW-0831">Ubiquinone biosynthesis</keyword>
<gene>
    <name evidence="3" type="primary">Coq2</name>
</gene>
<comment type="function">
    <text evidence="1 2 4 5">Mediates the second step in the final reaction sequence of coenzyme Q (CoQ) biosynthesis (PubMed:20526342). Catalyzes the prenylation of para-hydroxybenzoate (PHB) with an all-trans polyprenyl group (such as all-trans-nonaprenyl diphosphate) (PubMed:20526342). The length of the polyprenyl side chain varies depending on the species, in humans, the side chain is comprised of 10 isoprenyls producing CoQ10 (also known as ubiquinone), whereas rodents predominantly generate CoQ9 (PubMed:20526342). However, this specificity is not complete, human tissues have low amounts of CoQ9 and rodent organs contain some CoQ10 (By similarity). Plays a central role in the biosynthesis of CoQ9 (By similarity). CoQ9 is a vital molecule that transports electrons from mitochondrial respiratory chain complexes (By similarity). CoQs also function as cofactors for uncoupling protein and plays a role as regulator of the extracellularly-induced ceramide-dependent apoptotic pathway (By similarity). Regulates mitochondrial permeability transition pore (mPTP) opening and ROS production (pivotal events in cell death) in a tissue specific manner (PubMed:22387164).</text>
</comment>
<comment type="catalytic activity">
    <reaction evidence="6">
        <text>an all-trans-polyprenyl diphosphate + 4-hydroxybenzoate = a 4-hydroxy-3-(all-trans-polyprenyl)benzoate + diphosphate</text>
        <dbReference type="Rhea" id="RHEA:44504"/>
        <dbReference type="Rhea" id="RHEA-COMP:9514"/>
        <dbReference type="Rhea" id="RHEA-COMP:9564"/>
        <dbReference type="ChEBI" id="CHEBI:17879"/>
        <dbReference type="ChEBI" id="CHEBI:33019"/>
        <dbReference type="ChEBI" id="CHEBI:58914"/>
        <dbReference type="ChEBI" id="CHEBI:78396"/>
        <dbReference type="EC" id="2.5.1.39"/>
    </reaction>
    <physiologicalReaction direction="left-to-right" evidence="6">
        <dbReference type="Rhea" id="RHEA:44505"/>
    </physiologicalReaction>
</comment>
<comment type="catalytic activity">
    <reaction evidence="2">
        <text>all-trans-decaprenyl diphosphate + 4-hydroxybenzoate = 4-hydroxy-3-(all-trans-decaprenyl)benzoate + diphosphate</text>
        <dbReference type="Rhea" id="RHEA:44564"/>
        <dbReference type="ChEBI" id="CHEBI:17879"/>
        <dbReference type="ChEBI" id="CHEBI:33019"/>
        <dbReference type="ChEBI" id="CHEBI:60721"/>
        <dbReference type="ChEBI" id="CHEBI:84503"/>
        <dbReference type="EC" id="2.5.1.39"/>
    </reaction>
    <physiologicalReaction direction="left-to-right" evidence="2">
        <dbReference type="Rhea" id="RHEA:44565"/>
    </physiologicalReaction>
</comment>
<comment type="catalytic activity">
    <reaction evidence="6">
        <text>all-trans-nonaprenyl diphosphate + 4-hydroxybenzoate = 4-hydroxy-3-(all-trans-nonaprenyl)benzoate + diphosphate</text>
        <dbReference type="Rhea" id="RHEA:17709"/>
        <dbReference type="ChEBI" id="CHEBI:17879"/>
        <dbReference type="ChEBI" id="CHEBI:33019"/>
        <dbReference type="ChEBI" id="CHEBI:58391"/>
        <dbReference type="ChEBI" id="CHEBI:84502"/>
        <dbReference type="EC" id="2.5.1.39"/>
    </reaction>
    <physiologicalReaction direction="left-to-right" evidence="6">
        <dbReference type="Rhea" id="RHEA:17710"/>
    </physiologicalReaction>
</comment>
<comment type="cofactor">
    <cofactor evidence="3">
        <name>Mg(2+)</name>
        <dbReference type="ChEBI" id="CHEBI:18420"/>
    </cofactor>
</comment>
<comment type="pathway">
    <text evidence="6">Cofactor biosynthesis; ubiquinone biosynthesis.</text>
</comment>
<comment type="subcellular location">
    <subcellularLocation>
        <location evidence="3">Mitochondrion inner membrane</location>
        <topology evidence="3">Multi-pass membrane protein</topology>
        <orientation evidence="3">Matrix side</orientation>
    </subcellularLocation>
</comment>
<comment type="similarity">
    <text evidence="3">Belongs to the UbiA prenyltransferase family.</text>
</comment>
<evidence type="ECO:0000250" key="1">
    <source>
        <dbReference type="UniProtKB" id="Q66JT7"/>
    </source>
</evidence>
<evidence type="ECO:0000250" key="2">
    <source>
        <dbReference type="UniProtKB" id="Q96H96"/>
    </source>
</evidence>
<evidence type="ECO:0000255" key="3">
    <source>
        <dbReference type="HAMAP-Rule" id="MF_03189"/>
    </source>
</evidence>
<evidence type="ECO:0000269" key="4">
    <source>
    </source>
</evidence>
<evidence type="ECO:0000269" key="5">
    <source>
    </source>
</evidence>
<evidence type="ECO:0000305" key="6">
    <source>
    </source>
</evidence>
<feature type="transit peptide" description="Mitochondrion" evidence="3">
    <location>
        <begin position="1"/>
        <end position="63"/>
    </location>
</feature>
<feature type="chain" id="PRO_0000228625" description="4-hydroxybenzoate polyprenyltransferase, mitochondrial" evidence="3">
    <location>
        <begin position="64"/>
        <end position="374"/>
    </location>
</feature>
<feature type="topological domain" description="Mitochondrial matrix" evidence="2">
    <location>
        <begin position="64"/>
        <end position="83"/>
    </location>
</feature>
<feature type="transmembrane region" description="Helical" evidence="3">
    <location>
        <begin position="84"/>
        <end position="104"/>
    </location>
</feature>
<feature type="topological domain" description="Mitochondrial intermembrane" evidence="2">
    <location>
        <begin position="105"/>
        <end position="108"/>
    </location>
</feature>
<feature type="transmembrane region" description="Helical" evidence="3">
    <location>
        <begin position="109"/>
        <end position="129"/>
    </location>
</feature>
<feature type="topological domain" description="Mitochondrial matrix" evidence="2">
    <location>
        <begin position="130"/>
        <end position="153"/>
    </location>
</feature>
<feature type="transmembrane region" description="Helical" evidence="3">
    <location>
        <begin position="154"/>
        <end position="174"/>
    </location>
</feature>
<feature type="topological domain" description="Mitochondrial intermembrane" evidence="2">
    <location>
        <begin position="175"/>
        <end position="176"/>
    </location>
</feature>
<feature type="transmembrane region" description="Helical" evidence="3">
    <location>
        <begin position="177"/>
        <end position="197"/>
    </location>
</feature>
<feature type="topological domain" description="Mitochondrial matrix" evidence="2">
    <location>
        <begin position="198"/>
        <end position="200"/>
    </location>
</feature>
<feature type="transmembrane region" description="Helical" evidence="3">
    <location>
        <begin position="201"/>
        <end position="221"/>
    </location>
</feature>
<feature type="topological domain" description="Mitochondrial intermembrane" evidence="2">
    <location>
        <begin position="222"/>
        <end position="230"/>
    </location>
</feature>
<feature type="transmembrane region" description="Helical" evidence="3">
    <location>
        <begin position="231"/>
        <end position="251"/>
    </location>
</feature>
<feature type="topological domain" description="Mitochondrial matrix" evidence="2">
    <location>
        <begin position="252"/>
        <end position="277"/>
    </location>
</feature>
<feature type="transmembrane region" description="Helical" evidence="3">
    <location>
        <begin position="278"/>
        <end position="298"/>
    </location>
</feature>
<feature type="topological domain" description="Mitochondrial intermembrane" evidence="2">
    <location>
        <begin position="299"/>
        <end position="300"/>
    </location>
</feature>
<feature type="transmembrane region" description="Helical" evidence="3">
    <location>
        <begin position="301"/>
        <end position="321"/>
    </location>
</feature>
<feature type="topological domain" description="Mitochondrial matrix" evidence="2">
    <location>
        <begin position="322"/>
        <end position="332"/>
    </location>
</feature>
<feature type="transmembrane region" description="Helical" evidence="3">
    <location>
        <begin position="333"/>
        <end position="353"/>
    </location>
</feature>
<feature type="topological domain" description="Mitochondrial intermembrane" evidence="2">
    <location>
        <begin position="354"/>
        <end position="374"/>
    </location>
</feature>
<name>COQ2_RAT</name>
<proteinExistence type="evidence at protein level"/>